<evidence type="ECO:0000250" key="1"/>
<evidence type="ECO:0000305" key="2"/>
<name>SHU2_YEASO</name>
<reference key="1">
    <citation type="journal article" date="2011" name="PLoS Genet.">
        <title>Whole-genome comparison reveals novel genetic elements that characterize the genome of industrial strains of Saccharomyces cerevisiae.</title>
        <authorList>
            <person name="Borneman A.R."/>
            <person name="Desany B.A."/>
            <person name="Riches D."/>
            <person name="Affourtit J.P."/>
            <person name="Forgan A.H."/>
            <person name="Pretorius I.S."/>
            <person name="Egholm M."/>
            <person name="Chambers P.J."/>
        </authorList>
    </citation>
    <scope>NUCLEOTIDE SEQUENCE [LARGE SCALE GENOMIC DNA]</scope>
    <source>
        <strain>FostersO</strain>
    </source>
</reference>
<feature type="chain" id="PRO_0000409744" description="Suppressor of hydroxyurea sensitivity protein 2">
    <location>
        <begin position="1"/>
        <end position="223"/>
    </location>
</feature>
<protein>
    <recommendedName>
        <fullName>Suppressor of hydroxyurea sensitivity protein 2</fullName>
    </recommendedName>
</protein>
<dbReference type="EMBL" id="AEEZ01000015">
    <property type="protein sequence ID" value="EGA63071.1"/>
    <property type="molecule type" value="Genomic_DNA"/>
</dbReference>
<dbReference type="HOGENOM" id="CLU_1115918_0_0_1"/>
<dbReference type="OMA" id="WLKLHLN"/>
<dbReference type="OrthoDB" id="38539at4893"/>
<dbReference type="GO" id="GO:0005634">
    <property type="term" value="C:nucleus"/>
    <property type="evidence" value="ECO:0007669"/>
    <property type="project" value="UniProtKB-SubCell"/>
</dbReference>
<dbReference type="GO" id="GO:0006310">
    <property type="term" value="P:DNA recombination"/>
    <property type="evidence" value="ECO:0007669"/>
    <property type="project" value="UniProtKB-KW"/>
</dbReference>
<dbReference type="GO" id="GO:0006281">
    <property type="term" value="P:DNA repair"/>
    <property type="evidence" value="ECO:0007669"/>
    <property type="project" value="UniProtKB-KW"/>
</dbReference>
<sequence length="223" mass="26099">MSKDVIEYSKLFAKLVNTNDDTKLDDTIASFLXYMFPRELFIRAISLLESSDMFIYILDRVHNKEGNEHTSLIDVLVDEFYKGSSNSLLEYRLIVKDTNDGAPXILVDIAHWFCSCEEFCKYFHEALEKTDEKEELHDVLINEVDDHLQFSDDRFAQLDPHSLSKQWYFKFDKICCSHLLAFSILLRSSINVLKFFTVNSNKVFVIAIDNIDEWLNLHINIVE</sequence>
<gene>
    <name type="primary">SHU2</name>
    <name type="ORF">FOSTERSO_0648</name>
</gene>
<keyword id="KW-0227">DNA damage</keyword>
<keyword id="KW-0233">DNA recombination</keyword>
<keyword id="KW-0234">DNA repair</keyword>
<keyword id="KW-0539">Nucleus</keyword>
<proteinExistence type="inferred from homology"/>
<comment type="function">
    <text evidence="1">Plays a role in a RAD51/RAD54-dependent homologous recombination repair (HRR) pathway to repair MMS-induced lesions during S-phase. Required for error-free repair of spontaneous and induced DNA lesions to protect the genome from mutation (By similarity).</text>
</comment>
<comment type="subunit">
    <text evidence="1">Component of the SHU complex composed of at least CSM2, PSY3, SHU1 and SHU2.</text>
</comment>
<comment type="subcellular location">
    <subcellularLocation>
        <location evidence="1">Nucleus</location>
    </subcellularLocation>
</comment>
<comment type="similarity">
    <text evidence="2">Belongs to the SHU2 family.</text>
</comment>
<organism>
    <name type="scientific">Saccharomyces cerevisiae (strain FostersO)</name>
    <name type="common">Baker's yeast</name>
    <dbReference type="NCBI Taxonomy" id="764101"/>
    <lineage>
        <taxon>Eukaryota</taxon>
        <taxon>Fungi</taxon>
        <taxon>Dikarya</taxon>
        <taxon>Ascomycota</taxon>
        <taxon>Saccharomycotina</taxon>
        <taxon>Saccharomycetes</taxon>
        <taxon>Saccharomycetales</taxon>
        <taxon>Saccharomycetaceae</taxon>
        <taxon>Saccharomyces</taxon>
    </lineage>
</organism>
<accession>E7NFN4</accession>